<sequence>MSPGQDATLLERSIKIAFVVALYWVVSISMVFLNKYLLSEVSLDAPMFVTWFQCVVAVVTCFILGELRSYHPALEMFPRFAFDTHVAMKVLPLSLVFVGMIAFNNLALKFVGVAFYNVGRSLTTIFNVLLSFFMLQQRTSMPALLMCGVIVAGFFVGVNKEQEQADLTMAGIMYGVLASLCVALNAIYIKKVMPFVDNDMWKLTAYNNMNAIFLFLPVITFMGEIPDIAASEDVYSGNYWFLMTVAGLLGIAIGLVSMLQINVTSPLTHNISGTSKACAQTILALQLNDESRTATWWLGNVFVLGGSLGYVLVKRAEMKRDLEKVPSSADSKA</sequence>
<reference key="1">
    <citation type="journal article" date="2008" name="Nature">
        <title>The genome of the choanoflagellate Monosiga brevicollis and the origin of metazoans.</title>
        <authorList>
            <consortium name="JGI Sequencing"/>
            <person name="King N."/>
            <person name="Westbrook M.J."/>
            <person name="Young S.L."/>
            <person name="Kuo A."/>
            <person name="Abedin M."/>
            <person name="Chapman J."/>
            <person name="Fairclough S."/>
            <person name="Hellsten U."/>
            <person name="Isogai Y."/>
            <person name="Letunic I."/>
            <person name="Marr M."/>
            <person name="Pincus D."/>
            <person name="Putnam N."/>
            <person name="Rokas A."/>
            <person name="Wright K.J."/>
            <person name="Zuzow R."/>
            <person name="Dirks W."/>
            <person name="Good M."/>
            <person name="Goodstein D."/>
            <person name="Lemons D."/>
            <person name="Li W."/>
            <person name="Lyons J.B."/>
            <person name="Morris A."/>
            <person name="Nichols S."/>
            <person name="Richter D.J."/>
            <person name="Salamov A."/>
            <person name="Bork P."/>
            <person name="Lim W.A."/>
            <person name="Manning G."/>
            <person name="Miller W.T."/>
            <person name="McGinnis W."/>
            <person name="Shapiro H."/>
            <person name="Tjian R."/>
            <person name="Grigoriev I.V."/>
            <person name="Rokhsar D."/>
        </authorList>
    </citation>
    <scope>NUCLEOTIDE SEQUENCE [LARGE SCALE GENOMIC DNA]</scope>
    <source>
        <strain>MX1 / ATCC 50154</strain>
    </source>
</reference>
<organism>
    <name type="scientific">Monosiga brevicollis</name>
    <name type="common">Choanoflagellate</name>
    <dbReference type="NCBI Taxonomy" id="81824"/>
    <lineage>
        <taxon>Eukaryota</taxon>
        <taxon>Choanoflagellata</taxon>
        <taxon>Craspedida</taxon>
        <taxon>Salpingoecidae</taxon>
        <taxon>Monosiga</taxon>
    </lineage>
</organism>
<name>FUCT1_MONBE</name>
<keyword id="KW-0333">Golgi apparatus</keyword>
<keyword id="KW-0472">Membrane</keyword>
<keyword id="KW-1185">Reference proteome</keyword>
<keyword id="KW-0762">Sugar transport</keyword>
<keyword id="KW-0812">Transmembrane</keyword>
<keyword id="KW-1133">Transmembrane helix</keyword>
<keyword id="KW-0813">Transport</keyword>
<evidence type="ECO:0000250" key="1">
    <source>
        <dbReference type="UniProtKB" id="Q96A29"/>
    </source>
</evidence>
<evidence type="ECO:0000255" key="2"/>
<evidence type="ECO:0000305" key="3"/>
<protein>
    <recommendedName>
        <fullName>GDP-fucose transporter 1</fullName>
    </recommendedName>
    <alternativeName>
        <fullName>Solute carrier family 35 member C1 homolog</fullName>
    </alternativeName>
</protein>
<feature type="chain" id="PRO_0000343211" description="GDP-fucose transporter 1">
    <location>
        <begin position="1"/>
        <end position="333"/>
    </location>
</feature>
<feature type="transmembrane region" description="Helical" evidence="2">
    <location>
        <begin position="13"/>
        <end position="33"/>
    </location>
</feature>
<feature type="transmembrane region" description="Helical" evidence="2">
    <location>
        <begin position="45"/>
        <end position="65"/>
    </location>
</feature>
<feature type="transmembrane region" description="Helical" evidence="2">
    <location>
        <begin position="95"/>
        <end position="115"/>
    </location>
</feature>
<feature type="transmembrane region" description="Helical" evidence="2">
    <location>
        <begin position="139"/>
        <end position="159"/>
    </location>
</feature>
<feature type="transmembrane region" description="Helical" evidence="2">
    <location>
        <begin position="169"/>
        <end position="189"/>
    </location>
</feature>
<feature type="transmembrane region" description="Helical" evidence="2">
    <location>
        <begin position="211"/>
        <end position="231"/>
    </location>
</feature>
<feature type="transmembrane region" description="Helical" evidence="2">
    <location>
        <begin position="239"/>
        <end position="259"/>
    </location>
</feature>
<feature type="transmembrane region" description="Helical" evidence="2">
    <location>
        <begin position="293"/>
        <end position="313"/>
    </location>
</feature>
<proteinExistence type="inferred from homology"/>
<accession>A9UUB8</accession>
<comment type="function">
    <text evidence="1">Antiporter specific for GDP-l-fucose and depending on the concomitant reverse transport of GMP. Involved in GDP-fucose import from the cytoplasm into the Golgi lumen.</text>
</comment>
<comment type="catalytic activity">
    <reaction evidence="1">
        <text>GMP(out) + GDP-beta-L-fucose(in) = GMP(in) + GDP-beta-L-fucose(out)</text>
        <dbReference type="Rhea" id="RHEA:72707"/>
        <dbReference type="ChEBI" id="CHEBI:57273"/>
        <dbReference type="ChEBI" id="CHEBI:58115"/>
    </reaction>
</comment>
<comment type="subcellular location">
    <subcellularLocation>
        <location evidence="1">Golgi apparatus membrane</location>
        <topology evidence="2">Multi-pass membrane protein</topology>
    </subcellularLocation>
</comment>
<comment type="similarity">
    <text evidence="3">Belongs to the TPT transporter family. SLC35C subfamily.</text>
</comment>
<gene>
    <name type="primary">slc35c1</name>
    <name type="synonym">fuct1</name>
    <name type="ORF">18313</name>
</gene>
<dbReference type="EMBL" id="CH991546">
    <property type="protein sequence ID" value="EDQ91067.1"/>
    <property type="molecule type" value="Genomic_DNA"/>
</dbReference>
<dbReference type="RefSeq" id="XP_001744364.1">
    <property type="nucleotide sequence ID" value="XM_001744312.1"/>
</dbReference>
<dbReference type="SMR" id="A9UUB8"/>
<dbReference type="FunCoup" id="A9UUB8">
    <property type="interactions" value="256"/>
</dbReference>
<dbReference type="STRING" id="81824.A9UUB8"/>
<dbReference type="EnsemblProtists" id="EDQ91067">
    <property type="protein sequence ID" value="EDQ91067"/>
    <property type="gene ID" value="MONBRDRAFT_18313"/>
</dbReference>
<dbReference type="KEGG" id="mbr:MONBRDRAFT_18313"/>
<dbReference type="eggNOG" id="KOG1442">
    <property type="taxonomic scope" value="Eukaryota"/>
</dbReference>
<dbReference type="InParanoid" id="A9UUB8"/>
<dbReference type="OMA" id="IHAVLIK"/>
<dbReference type="Proteomes" id="UP000001357">
    <property type="component" value="Unassembled WGS sequence"/>
</dbReference>
<dbReference type="GO" id="GO:0005794">
    <property type="term" value="C:Golgi apparatus"/>
    <property type="evidence" value="ECO:0000318"/>
    <property type="project" value="GO_Central"/>
</dbReference>
<dbReference type="GO" id="GO:0000139">
    <property type="term" value="C:Golgi membrane"/>
    <property type="evidence" value="ECO:0000250"/>
    <property type="project" value="UniProtKB"/>
</dbReference>
<dbReference type="GO" id="GO:0015297">
    <property type="term" value="F:antiporter activity"/>
    <property type="evidence" value="ECO:0000318"/>
    <property type="project" value="GO_Central"/>
</dbReference>
<dbReference type="GO" id="GO:0005457">
    <property type="term" value="F:GDP-fucose transmembrane transporter activity"/>
    <property type="evidence" value="ECO:0000250"/>
    <property type="project" value="UniProtKB"/>
</dbReference>
<dbReference type="GO" id="GO:0036085">
    <property type="term" value="P:GDP-fucose import into Golgi lumen"/>
    <property type="evidence" value="ECO:0000250"/>
    <property type="project" value="UniProtKB"/>
</dbReference>
<dbReference type="InterPro" id="IPR004853">
    <property type="entry name" value="Sugar_P_trans_dom"/>
</dbReference>
<dbReference type="InterPro" id="IPR050186">
    <property type="entry name" value="TPT_transporter"/>
</dbReference>
<dbReference type="PANTHER" id="PTHR11132">
    <property type="entry name" value="SOLUTE CARRIER FAMILY 35"/>
    <property type="match status" value="1"/>
</dbReference>
<dbReference type="Pfam" id="PF03151">
    <property type="entry name" value="TPT"/>
    <property type="match status" value="1"/>
</dbReference>